<name>RNZ_SYNS3</name>
<reference key="1">
    <citation type="journal article" date="2006" name="Proc. Natl. Acad. Sci. U.S.A.">
        <title>Genome sequence of Synechococcus CC9311: insights into adaptation to a coastal environment.</title>
        <authorList>
            <person name="Palenik B."/>
            <person name="Ren Q."/>
            <person name="Dupont C.L."/>
            <person name="Myers G.S."/>
            <person name="Heidelberg J.F."/>
            <person name="Badger J.H."/>
            <person name="Madupu R."/>
            <person name="Nelson W.C."/>
            <person name="Brinkac L.M."/>
            <person name="Dodson R.J."/>
            <person name="Durkin A.S."/>
            <person name="Daugherty S.C."/>
            <person name="Sullivan S.A."/>
            <person name="Khouri H."/>
            <person name="Mohamoud Y."/>
            <person name="Halpin R."/>
            <person name="Paulsen I.T."/>
        </authorList>
    </citation>
    <scope>NUCLEOTIDE SEQUENCE [LARGE SCALE GENOMIC DNA]</scope>
    <source>
        <strain>CC9311</strain>
    </source>
</reference>
<proteinExistence type="inferred from homology"/>
<gene>
    <name evidence="1" type="primary">rnz</name>
    <name type="ordered locus">sync_2249</name>
</gene>
<keyword id="KW-0255">Endonuclease</keyword>
<keyword id="KW-0378">Hydrolase</keyword>
<keyword id="KW-0479">Metal-binding</keyword>
<keyword id="KW-0540">Nuclease</keyword>
<keyword id="KW-1185">Reference proteome</keyword>
<keyword id="KW-0819">tRNA processing</keyword>
<keyword id="KW-0862">Zinc</keyword>
<feature type="chain" id="PRO_1000070346" description="Ribonuclease Z">
    <location>
        <begin position="1"/>
        <end position="315"/>
    </location>
</feature>
<feature type="active site" description="Proton acceptor" evidence="1">
    <location>
        <position position="66"/>
    </location>
</feature>
<feature type="binding site" evidence="1">
    <location>
        <position position="62"/>
    </location>
    <ligand>
        <name>Zn(2+)</name>
        <dbReference type="ChEBI" id="CHEBI:29105"/>
        <label>1</label>
        <note>catalytic</note>
    </ligand>
</feature>
<feature type="binding site" evidence="1">
    <location>
        <position position="64"/>
    </location>
    <ligand>
        <name>Zn(2+)</name>
        <dbReference type="ChEBI" id="CHEBI:29105"/>
        <label>1</label>
        <note>catalytic</note>
    </ligand>
</feature>
<feature type="binding site" evidence="1">
    <location>
        <position position="66"/>
    </location>
    <ligand>
        <name>Zn(2+)</name>
        <dbReference type="ChEBI" id="CHEBI:29105"/>
        <label>2</label>
        <note>catalytic</note>
    </ligand>
</feature>
<feature type="binding site" evidence="1">
    <location>
        <position position="67"/>
    </location>
    <ligand>
        <name>Zn(2+)</name>
        <dbReference type="ChEBI" id="CHEBI:29105"/>
        <label>2</label>
        <note>catalytic</note>
    </ligand>
</feature>
<feature type="binding site" evidence="1">
    <location>
        <position position="144"/>
    </location>
    <ligand>
        <name>Zn(2+)</name>
        <dbReference type="ChEBI" id="CHEBI:29105"/>
        <label>1</label>
        <note>catalytic</note>
    </ligand>
</feature>
<feature type="binding site" evidence="1">
    <location>
        <position position="215"/>
    </location>
    <ligand>
        <name>Zn(2+)</name>
        <dbReference type="ChEBI" id="CHEBI:29105"/>
        <label>1</label>
        <note>catalytic</note>
    </ligand>
</feature>
<feature type="binding site" evidence="1">
    <location>
        <position position="215"/>
    </location>
    <ligand>
        <name>Zn(2+)</name>
        <dbReference type="ChEBI" id="CHEBI:29105"/>
        <label>2</label>
        <note>catalytic</note>
    </ligand>
</feature>
<feature type="binding site" evidence="1">
    <location>
        <position position="273"/>
    </location>
    <ligand>
        <name>Zn(2+)</name>
        <dbReference type="ChEBI" id="CHEBI:29105"/>
        <label>2</label>
        <note>catalytic</note>
    </ligand>
</feature>
<sequence>MQVTFLGTSSGVPTRGRNVSSVALRLPQRSELWLFDCGEGTQHQFLRCDLRLSQLRRVFITHMHGDHVFGLPGLLASLGLGSTSNGVDLYGPDPLDAYLQGVLRTSSTRIGYPLAIHRVREAAEQNTVVFEDDDLIVTAAPLNHRVPAYAYRAEQKPRAGRFDIDKARELQIPPGPVYAALKRGESVTLDDGRTIDGRTLCGPEQPGVSVVYCTDTVFCEAAVQLAQGADLLIHESTFSHAEADMAFKRQHSTSTMAAQTAAEAGVKQLALTHLSPRYAPGNAVTADDLVAEASAIFPNTILARDFLNVDVNPSK</sequence>
<dbReference type="EC" id="3.1.26.11" evidence="1"/>
<dbReference type="EMBL" id="CP000435">
    <property type="protein sequence ID" value="ABI47549.1"/>
    <property type="molecule type" value="Genomic_DNA"/>
</dbReference>
<dbReference type="RefSeq" id="WP_011620159.1">
    <property type="nucleotide sequence ID" value="NC_008319.1"/>
</dbReference>
<dbReference type="SMR" id="Q0I7X5"/>
<dbReference type="STRING" id="64471.sync_2249"/>
<dbReference type="KEGG" id="syg:sync_2249"/>
<dbReference type="eggNOG" id="COG1234">
    <property type="taxonomic scope" value="Bacteria"/>
</dbReference>
<dbReference type="HOGENOM" id="CLU_031317_2_0_3"/>
<dbReference type="OrthoDB" id="9800940at2"/>
<dbReference type="Proteomes" id="UP000001961">
    <property type="component" value="Chromosome"/>
</dbReference>
<dbReference type="GO" id="GO:0042781">
    <property type="term" value="F:3'-tRNA processing endoribonuclease activity"/>
    <property type="evidence" value="ECO:0007669"/>
    <property type="project" value="UniProtKB-UniRule"/>
</dbReference>
<dbReference type="GO" id="GO:0008270">
    <property type="term" value="F:zinc ion binding"/>
    <property type="evidence" value="ECO:0007669"/>
    <property type="project" value="UniProtKB-UniRule"/>
</dbReference>
<dbReference type="CDD" id="cd07717">
    <property type="entry name" value="RNaseZ_ZiPD-like_MBL-fold"/>
    <property type="match status" value="1"/>
</dbReference>
<dbReference type="FunFam" id="3.60.15.10:FF:000002">
    <property type="entry name" value="Ribonuclease Z"/>
    <property type="match status" value="1"/>
</dbReference>
<dbReference type="Gene3D" id="3.60.15.10">
    <property type="entry name" value="Ribonuclease Z/Hydroxyacylglutathione hydrolase-like"/>
    <property type="match status" value="1"/>
</dbReference>
<dbReference type="HAMAP" id="MF_01818">
    <property type="entry name" value="RNase_Z_BN"/>
    <property type="match status" value="1"/>
</dbReference>
<dbReference type="InterPro" id="IPR001279">
    <property type="entry name" value="Metallo-B-lactamas"/>
</dbReference>
<dbReference type="InterPro" id="IPR036866">
    <property type="entry name" value="RibonucZ/Hydroxyglut_hydro"/>
</dbReference>
<dbReference type="InterPro" id="IPR013471">
    <property type="entry name" value="RNase_Z/BN"/>
</dbReference>
<dbReference type="NCBIfam" id="NF000801">
    <property type="entry name" value="PRK00055.1-3"/>
    <property type="match status" value="1"/>
</dbReference>
<dbReference type="NCBIfam" id="TIGR02651">
    <property type="entry name" value="RNase_Z"/>
    <property type="match status" value="1"/>
</dbReference>
<dbReference type="PANTHER" id="PTHR46018">
    <property type="entry name" value="ZINC PHOSPHODIESTERASE ELAC PROTEIN 1"/>
    <property type="match status" value="1"/>
</dbReference>
<dbReference type="PANTHER" id="PTHR46018:SF2">
    <property type="entry name" value="ZINC PHOSPHODIESTERASE ELAC PROTEIN 1"/>
    <property type="match status" value="1"/>
</dbReference>
<dbReference type="Pfam" id="PF12706">
    <property type="entry name" value="Lactamase_B_2"/>
    <property type="match status" value="1"/>
</dbReference>
<dbReference type="SUPFAM" id="SSF56281">
    <property type="entry name" value="Metallo-hydrolase/oxidoreductase"/>
    <property type="match status" value="1"/>
</dbReference>
<organism>
    <name type="scientific">Synechococcus sp. (strain CC9311)</name>
    <dbReference type="NCBI Taxonomy" id="64471"/>
    <lineage>
        <taxon>Bacteria</taxon>
        <taxon>Bacillati</taxon>
        <taxon>Cyanobacteriota</taxon>
        <taxon>Cyanophyceae</taxon>
        <taxon>Synechococcales</taxon>
        <taxon>Synechococcaceae</taxon>
        <taxon>Synechococcus</taxon>
    </lineage>
</organism>
<comment type="function">
    <text evidence="1">Zinc phosphodiesterase, which displays some tRNA 3'-processing endonuclease activity. Probably involved in tRNA maturation, by removing a 3'-trailer from precursor tRNA.</text>
</comment>
<comment type="catalytic activity">
    <reaction evidence="1">
        <text>Endonucleolytic cleavage of RNA, removing extra 3' nucleotides from tRNA precursor, generating 3' termini of tRNAs. A 3'-hydroxy group is left at the tRNA terminus and a 5'-phosphoryl group is left at the trailer molecule.</text>
        <dbReference type="EC" id="3.1.26.11"/>
    </reaction>
</comment>
<comment type="cofactor">
    <cofactor evidence="1">
        <name>Zn(2+)</name>
        <dbReference type="ChEBI" id="CHEBI:29105"/>
    </cofactor>
    <text evidence="1">Binds 2 Zn(2+) ions.</text>
</comment>
<comment type="subunit">
    <text evidence="1">Homodimer.</text>
</comment>
<comment type="similarity">
    <text evidence="1">Belongs to the RNase Z family.</text>
</comment>
<protein>
    <recommendedName>
        <fullName evidence="1">Ribonuclease Z</fullName>
        <shortName evidence="1">RNase Z</shortName>
        <ecNumber evidence="1">3.1.26.11</ecNumber>
    </recommendedName>
    <alternativeName>
        <fullName evidence="1">tRNA 3 endonuclease</fullName>
    </alternativeName>
    <alternativeName>
        <fullName evidence="1">tRNase Z</fullName>
    </alternativeName>
</protein>
<accession>Q0I7X5</accession>
<evidence type="ECO:0000255" key="1">
    <source>
        <dbReference type="HAMAP-Rule" id="MF_01818"/>
    </source>
</evidence>